<feature type="chain" id="PRO_0000278411" description="DNA replication complex GINS protein psf2">
    <location>
        <begin position="1"/>
        <end position="273"/>
    </location>
</feature>
<feature type="region of interest" description="Disordered" evidence="2">
    <location>
        <begin position="88"/>
        <end position="110"/>
    </location>
</feature>
<feature type="region of interest" description="Disordered" evidence="2">
    <location>
        <begin position="240"/>
        <end position="273"/>
    </location>
</feature>
<feature type="compositionally biased region" description="Basic and acidic residues" evidence="2">
    <location>
        <begin position="244"/>
        <end position="257"/>
    </location>
</feature>
<feature type="compositionally biased region" description="Acidic residues" evidence="2">
    <location>
        <begin position="261"/>
        <end position="273"/>
    </location>
</feature>
<protein>
    <recommendedName>
        <fullName>DNA replication complex GINS protein psf2</fullName>
    </recommendedName>
    <alternativeName>
        <fullName>DNA replication complex protein 2</fullName>
    </alternativeName>
</protein>
<gene>
    <name type="primary">drc-2</name>
    <name type="synonym">psf2</name>
    <name type="ORF">NCU06322</name>
</gene>
<name>PSF2_NEUCR</name>
<dbReference type="EMBL" id="CM002239">
    <property type="protein sequence ID" value="ESA42918.1"/>
    <property type="molecule type" value="Genomic_DNA"/>
</dbReference>
<dbReference type="EMBL" id="CM002239">
    <property type="protein sequence ID" value="ESA42919.1"/>
    <property type="molecule type" value="Genomic_DNA"/>
</dbReference>
<dbReference type="RefSeq" id="XP_011394164.1">
    <property type="nucleotide sequence ID" value="XM_011395862.1"/>
</dbReference>
<dbReference type="RefSeq" id="XP_011394165.1">
    <property type="nucleotide sequence ID" value="XM_011395863.1"/>
</dbReference>
<dbReference type="SMR" id="Q7SAA9"/>
<dbReference type="FunCoup" id="Q7SAA9">
    <property type="interactions" value="646"/>
</dbReference>
<dbReference type="STRING" id="367110.Q7SAA9"/>
<dbReference type="PaxDb" id="5141-EFNCRP00000006084"/>
<dbReference type="EnsemblFungi" id="ESA42918">
    <property type="protein sequence ID" value="ESA42918"/>
    <property type="gene ID" value="NCU06322"/>
</dbReference>
<dbReference type="EnsemblFungi" id="ESA42919">
    <property type="protein sequence ID" value="ESA42919"/>
    <property type="gene ID" value="NCU06322"/>
</dbReference>
<dbReference type="GeneID" id="3878718"/>
<dbReference type="KEGG" id="ncr:NCU06322"/>
<dbReference type="VEuPathDB" id="FungiDB:NCU06322"/>
<dbReference type="HOGENOM" id="CLU_078274_0_0_1"/>
<dbReference type="InParanoid" id="Q7SAA9"/>
<dbReference type="OMA" id="DSLNCMY"/>
<dbReference type="OrthoDB" id="1938138at2759"/>
<dbReference type="Proteomes" id="UP000001805">
    <property type="component" value="Chromosome 4, Linkage Group IV"/>
</dbReference>
<dbReference type="GO" id="GO:0000811">
    <property type="term" value="C:GINS complex"/>
    <property type="evidence" value="ECO:0000318"/>
    <property type="project" value="GO_Central"/>
</dbReference>
<dbReference type="GO" id="GO:0007059">
    <property type="term" value="P:chromosome segregation"/>
    <property type="evidence" value="ECO:0007669"/>
    <property type="project" value="UniProtKB-KW"/>
</dbReference>
<dbReference type="GO" id="GO:0006260">
    <property type="term" value="P:DNA replication"/>
    <property type="evidence" value="ECO:0007669"/>
    <property type="project" value="UniProtKB-KW"/>
</dbReference>
<dbReference type="GO" id="GO:0000727">
    <property type="term" value="P:double-strand break repair via break-induced replication"/>
    <property type="evidence" value="ECO:0000318"/>
    <property type="project" value="GO_Central"/>
</dbReference>
<dbReference type="CDD" id="cd11712">
    <property type="entry name" value="GINS_A_psf2"/>
    <property type="match status" value="1"/>
</dbReference>
<dbReference type="CDD" id="cd21694">
    <property type="entry name" value="GINS_B_Psf2"/>
    <property type="match status" value="1"/>
</dbReference>
<dbReference type="FunFam" id="1.20.58.1020:FF:000001">
    <property type="entry name" value="DNA replication complex GINS protein PSF2"/>
    <property type="match status" value="1"/>
</dbReference>
<dbReference type="FunFam" id="3.40.5.50:FF:000001">
    <property type="entry name" value="DNA replication complex GINS protein PSF2"/>
    <property type="match status" value="1"/>
</dbReference>
<dbReference type="Gene3D" id="1.20.58.1020">
    <property type="match status" value="1"/>
</dbReference>
<dbReference type="Gene3D" id="3.40.5.50">
    <property type="match status" value="1"/>
</dbReference>
<dbReference type="InterPro" id="IPR021151">
    <property type="entry name" value="GINS_A"/>
</dbReference>
<dbReference type="InterPro" id="IPR036224">
    <property type="entry name" value="GINS_bundle-like_dom_sf"/>
</dbReference>
<dbReference type="InterPro" id="IPR007257">
    <property type="entry name" value="GINS_Psf2"/>
</dbReference>
<dbReference type="InterPro" id="IPR056784">
    <property type="entry name" value="PSF2_N"/>
</dbReference>
<dbReference type="PANTHER" id="PTHR12772">
    <property type="entry name" value="DNA REPLICATION COMPLEX GINS PROTEIN PSF2"/>
    <property type="match status" value="1"/>
</dbReference>
<dbReference type="PANTHER" id="PTHR12772:SF0">
    <property type="entry name" value="DNA REPLICATION COMPLEX GINS PROTEIN PSF2"/>
    <property type="match status" value="1"/>
</dbReference>
<dbReference type="Pfam" id="PF25005">
    <property type="entry name" value="PSF2_N"/>
    <property type="match status" value="1"/>
</dbReference>
<dbReference type="Pfam" id="PF05916">
    <property type="entry name" value="Sld5"/>
    <property type="match status" value="1"/>
</dbReference>
<dbReference type="PIRSF" id="PIRSF028998">
    <property type="entry name" value="GINS_Psf2_subgr"/>
    <property type="match status" value="1"/>
</dbReference>
<dbReference type="SUPFAM" id="SSF158573">
    <property type="entry name" value="GINS helical bundle-like"/>
    <property type="match status" value="1"/>
</dbReference>
<dbReference type="SUPFAM" id="SSF160059">
    <property type="entry name" value="PriA/YqbF domain"/>
    <property type="match status" value="1"/>
</dbReference>
<accession>Q7SAA9</accession>
<accession>V5IM97</accession>
<sequence>MALPLPPGLTQNEVAFLAEMEMVTVVPRQRLDSIDLLGGKTPQLRPPHRAQLPLWLALLLKKQRRANIVPPAWMHPASLAEIIHRETKEDPEAFSPPPPPPSRALYSQPGTARRLNPSYLDDFTQTQQDSQQDPNSILSPPFLPSNVAESPAGYLPYHWLEVAEALLTHAGDDMPAPAGEVRSLLRDLVEVRAAKMRSSTSALEGFGDAYLTLRGVGAMELAENRAFLAGLVDGVRKIGASAEATRREEEEEARRGGDYGGDGDEDSDEDMGL</sequence>
<comment type="function">
    <text evidence="1">The GINS complex plays an essential role in the initiation of DNA replication. Has a role in chromosome segregation (By similarity).</text>
</comment>
<comment type="subunit">
    <text evidence="1">Component of the GINS complex which is a heterotetramer of div-26/sld5, drc-1/psf1, drc-2/psf2 and drc-3/psf3.</text>
</comment>
<comment type="subcellular location">
    <subcellularLocation>
        <location evidence="1">Nucleus</location>
    </subcellularLocation>
</comment>
<comment type="similarity">
    <text evidence="3">Belongs to the GINS2/PSF2 family.</text>
</comment>
<reference key="1">
    <citation type="journal article" date="2003" name="Nature">
        <title>The genome sequence of the filamentous fungus Neurospora crassa.</title>
        <authorList>
            <person name="Galagan J.E."/>
            <person name="Calvo S.E."/>
            <person name="Borkovich K.A."/>
            <person name="Selker E.U."/>
            <person name="Read N.D."/>
            <person name="Jaffe D.B."/>
            <person name="FitzHugh W."/>
            <person name="Ma L.-J."/>
            <person name="Smirnov S."/>
            <person name="Purcell S."/>
            <person name="Rehman B."/>
            <person name="Elkins T."/>
            <person name="Engels R."/>
            <person name="Wang S."/>
            <person name="Nielsen C.B."/>
            <person name="Butler J."/>
            <person name="Endrizzi M."/>
            <person name="Qui D."/>
            <person name="Ianakiev P."/>
            <person name="Bell-Pedersen D."/>
            <person name="Nelson M.A."/>
            <person name="Werner-Washburne M."/>
            <person name="Selitrennikoff C.P."/>
            <person name="Kinsey J.A."/>
            <person name="Braun E.L."/>
            <person name="Zelter A."/>
            <person name="Schulte U."/>
            <person name="Kothe G.O."/>
            <person name="Jedd G."/>
            <person name="Mewes H.-W."/>
            <person name="Staben C."/>
            <person name="Marcotte E."/>
            <person name="Greenberg D."/>
            <person name="Roy A."/>
            <person name="Foley K."/>
            <person name="Naylor J."/>
            <person name="Stange-Thomann N."/>
            <person name="Barrett R."/>
            <person name="Gnerre S."/>
            <person name="Kamal M."/>
            <person name="Kamvysselis M."/>
            <person name="Mauceli E.W."/>
            <person name="Bielke C."/>
            <person name="Rudd S."/>
            <person name="Frishman D."/>
            <person name="Krystofova S."/>
            <person name="Rasmussen C."/>
            <person name="Metzenberg R.L."/>
            <person name="Perkins D.D."/>
            <person name="Kroken S."/>
            <person name="Cogoni C."/>
            <person name="Macino G."/>
            <person name="Catcheside D.E.A."/>
            <person name="Li W."/>
            <person name="Pratt R.J."/>
            <person name="Osmani S.A."/>
            <person name="DeSouza C.P.C."/>
            <person name="Glass N.L."/>
            <person name="Orbach M.J."/>
            <person name="Berglund J.A."/>
            <person name="Voelker R."/>
            <person name="Yarden O."/>
            <person name="Plamann M."/>
            <person name="Seiler S."/>
            <person name="Dunlap J.C."/>
            <person name="Radford A."/>
            <person name="Aramayo R."/>
            <person name="Natvig D.O."/>
            <person name="Alex L.A."/>
            <person name="Mannhaupt G."/>
            <person name="Ebbole D.J."/>
            <person name="Freitag M."/>
            <person name="Paulsen I."/>
            <person name="Sachs M.S."/>
            <person name="Lander E.S."/>
            <person name="Nusbaum C."/>
            <person name="Birren B.W."/>
        </authorList>
    </citation>
    <scope>NUCLEOTIDE SEQUENCE [LARGE SCALE GENOMIC DNA]</scope>
    <source>
        <strain>ATCC 24698 / 74-OR23-1A / CBS 708.71 / DSM 1257 / FGSC 987</strain>
    </source>
</reference>
<proteinExistence type="inferred from homology"/>
<evidence type="ECO:0000250" key="1"/>
<evidence type="ECO:0000256" key="2">
    <source>
        <dbReference type="SAM" id="MobiDB-lite"/>
    </source>
</evidence>
<evidence type="ECO:0000305" key="3"/>
<organism>
    <name type="scientific">Neurospora crassa (strain ATCC 24698 / 74-OR23-1A / CBS 708.71 / DSM 1257 / FGSC 987)</name>
    <dbReference type="NCBI Taxonomy" id="367110"/>
    <lineage>
        <taxon>Eukaryota</taxon>
        <taxon>Fungi</taxon>
        <taxon>Dikarya</taxon>
        <taxon>Ascomycota</taxon>
        <taxon>Pezizomycotina</taxon>
        <taxon>Sordariomycetes</taxon>
        <taxon>Sordariomycetidae</taxon>
        <taxon>Sordariales</taxon>
        <taxon>Sordariaceae</taxon>
        <taxon>Neurospora</taxon>
    </lineage>
</organism>
<keyword id="KW-0159">Chromosome partition</keyword>
<keyword id="KW-0235">DNA replication</keyword>
<keyword id="KW-0539">Nucleus</keyword>
<keyword id="KW-1185">Reference proteome</keyword>